<organism>
    <name type="scientific">Mus musculus</name>
    <name type="common">Mouse</name>
    <dbReference type="NCBI Taxonomy" id="10090"/>
    <lineage>
        <taxon>Eukaryota</taxon>
        <taxon>Metazoa</taxon>
        <taxon>Chordata</taxon>
        <taxon>Craniata</taxon>
        <taxon>Vertebrata</taxon>
        <taxon>Euteleostomi</taxon>
        <taxon>Mammalia</taxon>
        <taxon>Eutheria</taxon>
        <taxon>Euarchontoglires</taxon>
        <taxon>Glires</taxon>
        <taxon>Rodentia</taxon>
        <taxon>Myomorpha</taxon>
        <taxon>Muroidea</taxon>
        <taxon>Muridae</taxon>
        <taxon>Murinae</taxon>
        <taxon>Mus</taxon>
        <taxon>Mus</taxon>
    </lineage>
</organism>
<accession>Q8QZY4</accession>
<accession>Q6T898</accession>
<comment type="function">
    <text evidence="3">Riboflavin-binding protein which might have a role in retinal flavin transport.</text>
</comment>
<comment type="subcellular location">
    <subcellularLocation>
        <location evidence="3">Secreted</location>
        <location evidence="3">Extracellular space</location>
        <location evidence="3">Extracellular matrix</location>
        <location evidence="3">Interphotoreceptor matrix</location>
    </subcellularLocation>
    <subcellularLocation>
        <location evidence="3">Cell membrane</location>
        <topology evidence="3">Peripheral membrane protein</topology>
    </subcellularLocation>
</comment>
<comment type="tissue specificity">
    <text evidence="3">Expressed in the peripheral retina where it localizes to the inter-photoreceptor matrix (at protein level). May be produced by rod photoreceptors (at protein level).</text>
</comment>
<comment type="PTM">
    <text evidence="3">Not N-glycosylated.</text>
</comment>
<comment type="similarity">
    <text evidence="4">Belongs to the folate receptor family.</text>
</comment>
<gene>
    <name type="primary">Rtbdn</name>
</gene>
<reference key="1">
    <citation type="submission" date="2003-10" db="EMBL/GenBank/DDBJ databases">
        <title>Characterization of mouse retbindin.</title>
        <authorList>
            <person name="Phelps M.A."/>
            <person name="Swaan P.W."/>
        </authorList>
    </citation>
    <scope>NUCLEOTIDE SEQUENCE [MRNA]</scope>
    <source>
        <strain>BALB/cJ</strain>
        <tissue>Eye</tissue>
    </source>
</reference>
<reference key="2">
    <citation type="submission" date="2004-01" db="EMBL/GenBank/DDBJ databases">
        <authorList>
            <person name="Wistow G."/>
            <person name="Wyatt K."/>
        </authorList>
    </citation>
    <scope>NUCLEOTIDE SEQUENCE [MRNA]</scope>
    <source>
        <strain>C57BL/6J</strain>
        <tissue>Eye</tissue>
    </source>
</reference>
<reference key="3">
    <citation type="journal article" date="2004" name="Genome Res.">
        <title>The status, quality, and expansion of the NIH full-length cDNA project: the Mammalian Gene Collection (MGC).</title>
        <authorList>
            <consortium name="The MGC Project Team"/>
        </authorList>
    </citation>
    <scope>NUCLEOTIDE SEQUENCE [LARGE SCALE MRNA]</scope>
    <source>
        <tissue>Eye</tissue>
    </source>
</reference>
<reference key="4">
    <citation type="journal article" date="2015" name="J. Biol. Chem.">
        <title>Retbindin is an extracellular riboflavin-binding protein found at the photoreceptor/retinal pigment epithelium interface.</title>
        <authorList>
            <person name="Kelley R.A."/>
            <person name="Al-Ubaidi M.R."/>
            <person name="Naash M.I."/>
        </authorList>
    </citation>
    <scope>FUNCTION</scope>
    <scope>SUBCELLULAR LOCATION</scope>
    <scope>TISSUE SPECIFICITY</scope>
    <scope>LACK OF GLYCOSYLATION</scope>
</reference>
<protein>
    <recommendedName>
        <fullName>Retbindin</fullName>
    </recommendedName>
</protein>
<name>RTBDN_MOUSE</name>
<dbReference type="EMBL" id="AY428631">
    <property type="protein sequence ID" value="AAR87849.1"/>
    <property type="molecule type" value="mRNA"/>
</dbReference>
<dbReference type="EMBL" id="AY527275">
    <property type="protein sequence ID" value="AAS20324.1"/>
    <property type="molecule type" value="mRNA"/>
</dbReference>
<dbReference type="EMBL" id="AY527276">
    <property type="protein sequence ID" value="AAS20325.1"/>
    <property type="molecule type" value="mRNA"/>
</dbReference>
<dbReference type="EMBL" id="BC022744">
    <property type="protein sequence ID" value="AAH22744.1"/>
    <property type="molecule type" value="mRNA"/>
</dbReference>
<dbReference type="EMBL" id="BC023051">
    <property type="protein sequence ID" value="AAH23051.1"/>
    <property type="molecule type" value="mRNA"/>
</dbReference>
<dbReference type="EMBL" id="BC027079">
    <property type="protein sequence ID" value="AAH27079.1"/>
    <property type="molecule type" value="mRNA"/>
</dbReference>
<dbReference type="CCDS" id="CCDS22485.1"/>
<dbReference type="RefSeq" id="NP_001344255.1">
    <property type="nucleotide sequence ID" value="NM_001357326.1"/>
</dbReference>
<dbReference type="RefSeq" id="NP_001344257.1">
    <property type="nucleotide sequence ID" value="NM_001357328.1"/>
</dbReference>
<dbReference type="RefSeq" id="NP_659178.1">
    <property type="nucleotide sequence ID" value="NM_144929.3"/>
</dbReference>
<dbReference type="RefSeq" id="XP_006530928.1">
    <property type="nucleotide sequence ID" value="XM_006530865.3"/>
</dbReference>
<dbReference type="RefSeq" id="XP_036009853.1">
    <property type="nucleotide sequence ID" value="XM_036153960.1"/>
</dbReference>
<dbReference type="SMR" id="Q8QZY4"/>
<dbReference type="FunCoup" id="Q8QZY4">
    <property type="interactions" value="1"/>
</dbReference>
<dbReference type="STRING" id="10090.ENSMUSP00000070558"/>
<dbReference type="GlyGen" id="Q8QZY4">
    <property type="glycosylation" value="1 site, 1 N-linked glycan (1 site)"/>
</dbReference>
<dbReference type="PhosphoSitePlus" id="Q8QZY4"/>
<dbReference type="PaxDb" id="10090-ENSMUSP00000070558"/>
<dbReference type="Antibodypedia" id="65265">
    <property type="antibodies" value="49 antibodies from 14 providers"/>
</dbReference>
<dbReference type="DNASU" id="234542"/>
<dbReference type="Ensembl" id="ENSMUST00000067472.14">
    <property type="protein sequence ID" value="ENSMUSP00000070558.8"/>
    <property type="gene ID" value="ENSMUSG00000048617.17"/>
</dbReference>
<dbReference type="Ensembl" id="ENSMUST00000109740.9">
    <property type="protein sequence ID" value="ENSMUSP00000105362.3"/>
    <property type="gene ID" value="ENSMUSG00000048617.17"/>
</dbReference>
<dbReference type="Ensembl" id="ENSMUST00000121880.8">
    <property type="protein sequence ID" value="ENSMUSP00000113982.2"/>
    <property type="gene ID" value="ENSMUSG00000048617.17"/>
</dbReference>
<dbReference type="GeneID" id="234542"/>
<dbReference type="KEGG" id="mmu:234542"/>
<dbReference type="UCSC" id="uc009mog.1">
    <property type="organism name" value="mouse"/>
</dbReference>
<dbReference type="AGR" id="MGI:2443686"/>
<dbReference type="CTD" id="83546"/>
<dbReference type="MGI" id="MGI:2443686">
    <property type="gene designation" value="Rtbdn"/>
</dbReference>
<dbReference type="VEuPathDB" id="HostDB:ENSMUSG00000048617"/>
<dbReference type="eggNOG" id="ENOG502RYYP">
    <property type="taxonomic scope" value="Eukaryota"/>
</dbReference>
<dbReference type="GeneTree" id="ENSGT00950000183144"/>
<dbReference type="HOGENOM" id="CLU_081745_0_0_1"/>
<dbReference type="InParanoid" id="Q8QZY4"/>
<dbReference type="OMA" id="ESDITCG"/>
<dbReference type="OrthoDB" id="5982417at2759"/>
<dbReference type="PhylomeDB" id="Q8QZY4"/>
<dbReference type="TreeFam" id="TF337710"/>
<dbReference type="BioGRID-ORCS" id="234542">
    <property type="hits" value="0 hits in 78 CRISPR screens"/>
</dbReference>
<dbReference type="ChiTaRS" id="Rtbdn">
    <property type="organism name" value="mouse"/>
</dbReference>
<dbReference type="PRO" id="PR:Q8QZY4"/>
<dbReference type="Proteomes" id="UP000000589">
    <property type="component" value="Chromosome 8"/>
</dbReference>
<dbReference type="RNAct" id="Q8QZY4">
    <property type="molecule type" value="protein"/>
</dbReference>
<dbReference type="Bgee" id="ENSMUSG00000048617">
    <property type="expression patterns" value="Expressed in retinal neural layer and 41 other cell types or tissues"/>
</dbReference>
<dbReference type="ExpressionAtlas" id="Q8QZY4">
    <property type="expression patterns" value="baseline and differential"/>
</dbReference>
<dbReference type="GO" id="GO:0009897">
    <property type="term" value="C:external side of plasma membrane"/>
    <property type="evidence" value="ECO:0000314"/>
    <property type="project" value="UniProtKB"/>
</dbReference>
<dbReference type="GO" id="GO:0005576">
    <property type="term" value="C:extracellular region"/>
    <property type="evidence" value="ECO:0007669"/>
    <property type="project" value="UniProtKB-KW"/>
</dbReference>
<dbReference type="GO" id="GO:0033165">
    <property type="term" value="C:interphotoreceptor matrix"/>
    <property type="evidence" value="ECO:0000314"/>
    <property type="project" value="UniProtKB"/>
</dbReference>
<dbReference type="GO" id="GO:1902444">
    <property type="term" value="F:riboflavin binding"/>
    <property type="evidence" value="ECO:0000314"/>
    <property type="project" value="UniProtKB"/>
</dbReference>
<dbReference type="InterPro" id="IPR004269">
    <property type="entry name" value="Folate_rcpt"/>
</dbReference>
<dbReference type="InterPro" id="IPR018143">
    <property type="entry name" value="Folate_rcpt-like"/>
</dbReference>
<dbReference type="PANTHER" id="PTHR10517">
    <property type="entry name" value="FOLATE RECEPTOR"/>
    <property type="match status" value="1"/>
</dbReference>
<dbReference type="PANTHER" id="PTHR10517:SF19">
    <property type="entry name" value="RETBINDIN"/>
    <property type="match status" value="1"/>
</dbReference>
<dbReference type="Pfam" id="PF03024">
    <property type="entry name" value="Folate_rec"/>
    <property type="match status" value="1"/>
</dbReference>
<feature type="signal peptide" evidence="2">
    <location>
        <begin position="1"/>
        <end position="31"/>
    </location>
</feature>
<feature type="chain" id="PRO_0000043175" description="Retbindin">
    <location>
        <begin position="32"/>
        <end position="247"/>
    </location>
</feature>
<feature type="disulfide bond" evidence="1">
    <location>
        <begin position="99"/>
        <end position="169"/>
    </location>
</feature>
<feature type="disulfide bond" evidence="1">
    <location>
        <begin position="106"/>
        <end position="146"/>
    </location>
</feature>
<feature type="disulfide bond" evidence="1">
    <location>
        <begin position="139"/>
        <end position="183"/>
    </location>
</feature>
<feature type="disulfide bond" evidence="1">
    <location>
        <begin position="152"/>
        <end position="165"/>
    </location>
</feature>
<feature type="sequence conflict" description="In Ref. 1; AAR87849." evidence="4" ref="1">
    <original>V</original>
    <variation>E</variation>
    <location>
        <position position="82"/>
    </location>
</feature>
<feature type="sequence conflict" description="In Ref. 1; AAR87849." evidence="4" ref="1">
    <original>V</original>
    <variation>A</variation>
    <location>
        <position position="186"/>
    </location>
</feature>
<feature type="sequence conflict" description="In Ref. 1; AAR87849." evidence="4" ref="1">
    <original>P</original>
    <variation>T</variation>
    <location>
        <position position="209"/>
    </location>
</feature>
<keyword id="KW-1003">Cell membrane</keyword>
<keyword id="KW-1015">Disulfide bond</keyword>
<keyword id="KW-0272">Extracellular matrix</keyword>
<keyword id="KW-0472">Membrane</keyword>
<keyword id="KW-1185">Reference proteome</keyword>
<keyword id="KW-0964">Secreted</keyword>
<keyword id="KW-0732">Signal</keyword>
<sequence length="247" mass="26559">MAHEGHSQHSGLVWALRPILAWIFLVACGWSHPLQTRSWGHPGLAAKVRTGQLQPAGHPQSSVLPSYPRIQVPGSQTPPVPVPCCTAEIDRPESLLESCGAPSPECEFFLGQLQGALRDRFHPQLFGARPVQPLCPELCQIWFTTCQADFICGPTWLQSSGERGCEPSCRTYGQTFANATDLCHSVLGHVLRVAAPGSSHCLNVSISSPGARRRPRAWISNVVGSGSGSGSGDSPEPMFGFQYVSLP</sequence>
<proteinExistence type="evidence at protein level"/>
<evidence type="ECO:0000250" key="1">
    <source>
        <dbReference type="UniProtKB" id="P15328"/>
    </source>
</evidence>
<evidence type="ECO:0000255" key="2"/>
<evidence type="ECO:0000269" key="3">
    <source>
    </source>
</evidence>
<evidence type="ECO:0000305" key="4"/>